<keyword id="KW-0025">Alternative splicing</keyword>
<keyword id="KW-1003">Cell membrane</keyword>
<keyword id="KW-0472">Membrane</keyword>
<keyword id="KW-0479">Metal-binding</keyword>
<keyword id="KW-0539">Nucleus</keyword>
<keyword id="KW-1185">Reference proteome</keyword>
<keyword id="KW-0808">Transferase</keyword>
<keyword id="KW-0833">Ubl conjugation pathway</keyword>
<keyword id="KW-0862">Zinc</keyword>
<keyword id="KW-0863">Zinc-finger</keyword>
<reference key="1">
    <citation type="journal article" date="2005" name="Plant Physiol.">
        <title>Functional analysis of the RING-type ubiquitin ligase family of Arabidopsis.</title>
        <authorList>
            <person name="Stone S.L."/>
            <person name="Hauksdottir H."/>
            <person name="Troy A."/>
            <person name="Herschleb J."/>
            <person name="Kraft E."/>
            <person name="Callis J."/>
        </authorList>
    </citation>
    <scope>NUCLEOTIDE SEQUENCE [MRNA] (ISOFORM 1)</scope>
    <source>
        <strain>cv. Columbia</strain>
        <tissue>Leaf</tissue>
    </source>
</reference>
<reference key="2">
    <citation type="journal article" date="2000" name="Nature">
        <title>Sequence and analysis of chromosome 1 of the plant Arabidopsis thaliana.</title>
        <authorList>
            <person name="Theologis A."/>
            <person name="Ecker J.R."/>
            <person name="Palm C.J."/>
            <person name="Federspiel N.A."/>
            <person name="Kaul S."/>
            <person name="White O."/>
            <person name="Alonso J."/>
            <person name="Altafi H."/>
            <person name="Araujo R."/>
            <person name="Bowman C.L."/>
            <person name="Brooks S.Y."/>
            <person name="Buehler E."/>
            <person name="Chan A."/>
            <person name="Chao Q."/>
            <person name="Chen H."/>
            <person name="Cheuk R.F."/>
            <person name="Chin C.W."/>
            <person name="Chung M.K."/>
            <person name="Conn L."/>
            <person name="Conway A.B."/>
            <person name="Conway A.R."/>
            <person name="Creasy T.H."/>
            <person name="Dewar K."/>
            <person name="Dunn P."/>
            <person name="Etgu P."/>
            <person name="Feldblyum T.V."/>
            <person name="Feng J.-D."/>
            <person name="Fong B."/>
            <person name="Fujii C.Y."/>
            <person name="Gill J.E."/>
            <person name="Goldsmith A.D."/>
            <person name="Haas B."/>
            <person name="Hansen N.F."/>
            <person name="Hughes B."/>
            <person name="Huizar L."/>
            <person name="Hunter J.L."/>
            <person name="Jenkins J."/>
            <person name="Johnson-Hopson C."/>
            <person name="Khan S."/>
            <person name="Khaykin E."/>
            <person name="Kim C.J."/>
            <person name="Koo H.L."/>
            <person name="Kremenetskaia I."/>
            <person name="Kurtz D.B."/>
            <person name="Kwan A."/>
            <person name="Lam B."/>
            <person name="Langin-Hooper S."/>
            <person name="Lee A."/>
            <person name="Lee J.M."/>
            <person name="Lenz C.A."/>
            <person name="Li J.H."/>
            <person name="Li Y.-P."/>
            <person name="Lin X."/>
            <person name="Liu S.X."/>
            <person name="Liu Z.A."/>
            <person name="Luros J.S."/>
            <person name="Maiti R."/>
            <person name="Marziali A."/>
            <person name="Militscher J."/>
            <person name="Miranda M."/>
            <person name="Nguyen M."/>
            <person name="Nierman W.C."/>
            <person name="Osborne B.I."/>
            <person name="Pai G."/>
            <person name="Peterson J."/>
            <person name="Pham P.K."/>
            <person name="Rizzo M."/>
            <person name="Rooney T."/>
            <person name="Rowley D."/>
            <person name="Sakano H."/>
            <person name="Salzberg S.L."/>
            <person name="Schwartz J.R."/>
            <person name="Shinn P."/>
            <person name="Southwick A.M."/>
            <person name="Sun H."/>
            <person name="Tallon L.J."/>
            <person name="Tambunga G."/>
            <person name="Toriumi M.J."/>
            <person name="Town C.D."/>
            <person name="Utterback T."/>
            <person name="Van Aken S."/>
            <person name="Vaysberg M."/>
            <person name="Vysotskaia V.S."/>
            <person name="Walker M."/>
            <person name="Wu D."/>
            <person name="Yu G."/>
            <person name="Fraser C.M."/>
            <person name="Venter J.C."/>
            <person name="Davis R.W."/>
        </authorList>
    </citation>
    <scope>NUCLEOTIDE SEQUENCE [LARGE SCALE GENOMIC DNA]</scope>
    <source>
        <strain>cv. Columbia</strain>
    </source>
</reference>
<reference key="3">
    <citation type="journal article" date="2017" name="Plant J.">
        <title>Araport11: a complete reannotation of the Arabidopsis thaliana reference genome.</title>
        <authorList>
            <person name="Cheng C.Y."/>
            <person name="Krishnakumar V."/>
            <person name="Chan A.P."/>
            <person name="Thibaud-Nissen F."/>
            <person name="Schobel S."/>
            <person name="Town C.D."/>
        </authorList>
    </citation>
    <scope>GENOME REANNOTATION</scope>
    <source>
        <strain>cv. Columbia</strain>
    </source>
</reference>
<reference key="4">
    <citation type="submission" date="2006-07" db="EMBL/GenBank/DDBJ databases">
        <title>Large-scale analysis of RIKEN Arabidopsis full-length (RAFL) cDNAs.</title>
        <authorList>
            <person name="Totoki Y."/>
            <person name="Seki M."/>
            <person name="Ishida J."/>
            <person name="Nakajima M."/>
            <person name="Enju A."/>
            <person name="Kamiya A."/>
            <person name="Narusaka M."/>
            <person name="Shin-i T."/>
            <person name="Nakagawa M."/>
            <person name="Sakamoto N."/>
            <person name="Oishi K."/>
            <person name="Kohara Y."/>
            <person name="Kobayashi M."/>
            <person name="Toyoda A."/>
            <person name="Sakaki Y."/>
            <person name="Sakurai T."/>
            <person name="Iida K."/>
            <person name="Akiyama K."/>
            <person name="Satou M."/>
            <person name="Toyoda T."/>
            <person name="Konagaya A."/>
            <person name="Carninci P."/>
            <person name="Kawai J."/>
            <person name="Hayashizaki Y."/>
            <person name="Shinozaki K."/>
        </authorList>
    </citation>
    <scope>NUCLEOTIDE SEQUENCE [LARGE SCALE MRNA] (ISOFORM 1)</scope>
    <source>
        <strain>cv. Columbia</strain>
    </source>
</reference>
<reference key="5">
    <citation type="submission" date="2002-03" db="EMBL/GenBank/DDBJ databases">
        <title>Full-length cDNA from Arabidopsis thaliana.</title>
        <authorList>
            <person name="Brover V.V."/>
            <person name="Troukhan M.E."/>
            <person name="Alexandrov N.A."/>
            <person name="Lu Y.-P."/>
            <person name="Flavell R.B."/>
            <person name="Feldmann K.A."/>
        </authorList>
    </citation>
    <scope>NUCLEOTIDE SEQUENCE [LARGE SCALE MRNA] (ISOFORM 1)</scope>
</reference>
<reference key="6">
    <citation type="submission" date="2008-10" db="EMBL/GenBank/DDBJ databases">
        <title>Arabidopsis ORF clones.</title>
        <authorList>
            <person name="De Los Reyes C."/>
            <person name="Quan R."/>
            <person name="Chen H."/>
            <person name="Bautista V.R."/>
            <person name="Kim C.J."/>
            <person name="Ecker J.R."/>
        </authorList>
    </citation>
    <scope>NUCLEOTIDE SEQUENCE [LARGE SCALE MRNA] (ISOFORM 1)</scope>
</reference>
<reference key="7">
    <citation type="journal article" date="2007" name="Plant J.">
        <title>A mutation in NLA, which encodes a RING-type ubiquitin ligase, disrupts the adaptability of Arabidopsis to nitrogen limitation.</title>
        <authorList>
            <person name="Peng M."/>
            <person name="Hannam C."/>
            <person name="Gu H."/>
            <person name="Bi Y.-M."/>
            <person name="Rothstein S.J."/>
        </authorList>
    </citation>
    <scope>FUNCTION</scope>
    <scope>MUTANT NLA</scope>
    <scope>TISSUE SPECIFICITY</scope>
    <scope>INTERACTION WITH UBC8</scope>
    <scope>SUBCELLULAR LOCATION</scope>
</reference>
<reference key="8">
    <citation type="journal article" date="2008" name="J. Exp. Bot.">
        <title>Adaptation of Arabidopsis to nitrogen limitation involves induction of anthocyanin synthesis which is controlled by the NLA gene.</title>
        <authorList>
            <person name="Peng M."/>
            <person name="Hudson D."/>
            <person name="Schofield A."/>
            <person name="Tsao R."/>
            <person name="Yang R."/>
            <person name="Gu H."/>
            <person name="Bi Y.-M."/>
            <person name="Rothstein S.J."/>
        </authorList>
    </citation>
    <scope>FUNCTION</scope>
</reference>
<reference key="9">
    <citation type="journal article" date="2008" name="Plant Physiol.">
        <title>BAH1/NLA, a RING-type ubiquitin E3 ligase, regulates the accumulation of salicylic acid and immune responses to pseudomonas syringae DC3000.</title>
        <authorList>
            <person name="Yaeno T."/>
            <person name="Iba K."/>
        </authorList>
    </citation>
    <scope>FUNCTION</scope>
    <scope>MUTAGENESIS OF SER-55; GLU-74; VAL-156; ARG-160; GLU-162 AND GLU-181</scope>
    <scope>DISRUPTION PHENOTYPE</scope>
    <scope>INDUCTION</scope>
</reference>
<reference key="10">
    <citation type="journal article" date="2011" name="PLoS Genet.">
        <title>Genetic regulation by NLA and microRNA827 for maintaining nitrate-dependent phosphate homeostasis in arabidopsis.</title>
        <authorList>
            <person name="Kant S."/>
            <person name="Peng M."/>
            <person name="Rothstein S.J."/>
        </authorList>
    </citation>
    <scope>FUNCTION</scope>
</reference>
<reference key="11">
    <citation type="journal article" date="2013" name="Plant Cell">
        <title>Nitrogen limitation adaptation, a target of microRNA827, mediates degradation of plasma membrane-localized phosphate transporters to maintain phosphate homeostasis in Arabidopsis.</title>
        <authorList>
            <person name="Lin W.Y."/>
            <person name="Huang T.K."/>
            <person name="Chiou T.J."/>
        </authorList>
    </citation>
    <scope>FUNCTION</scope>
    <scope>CATALYTIC ACTIVITY</scope>
    <scope>INTERACTION WITH PHT1-1 AND PHT1-4</scope>
    <scope>SUBCELLULAR LOCATION</scope>
    <scope>DOMAIN</scope>
    <scope>MUTAGENESIS OF CYS-279</scope>
</reference>
<reference key="12">
    <citation type="journal article" date="2014" name="Plant Cell">
        <title>NITROGEN LIMITATION ADAPTATION recruits PHOSPHATE2 to target the phosphate transporter PT2 for degradation during the regulation of Arabidopsis phosphate homeostasis.</title>
        <authorList>
            <person name="Park B.S."/>
            <person name="Seo J.S."/>
            <person name="Chua N.H."/>
        </authorList>
    </citation>
    <scope>FUNCTION</scope>
    <scope>CATALYTIC ACTIVITY</scope>
    <scope>SUBUNIT</scope>
    <scope>INTERACTION WITH UBC24/PHO2</scope>
    <scope>SUBCELLULAR LOCATION</scope>
    <scope>DOMAIN</scope>
</reference>
<reference key="13">
    <citation type="journal article" date="2017" name="New Phytol.">
        <title>Nitrogen Limitation Adaptation (NLA) is involved in source-to-sink remobilization of nitrate by mediating the degradation of NRT1.7 in Arabidopsis.</title>
        <authorList>
            <person name="Liu W."/>
            <person name="Sun Q."/>
            <person name="Wang K."/>
            <person name="Du Q."/>
            <person name="Li W.X."/>
        </authorList>
    </citation>
    <scope>FUNCTION</scope>
    <scope>CATALYTIC ACTIVITY</scope>
    <scope>INTERACTION WITH NPF2.13/NRT1.7</scope>
    <scope>SUBCELLULAR LOCATION</scope>
</reference>
<reference key="14">
    <citation type="journal article" date="2018" name="Nat. Plants">
        <title>Arabidopsis NITROGEN LIMITATION ADAPTATION regulates ORE1 homeostasis during senescence induced by nitrogen deficiency.</title>
        <authorList>
            <person name="Park B.S."/>
            <person name="Yao T."/>
            <person name="Seo J.S."/>
            <person name="Wong E.C.C."/>
            <person name="Mitsuda N."/>
            <person name="Huang C.H."/>
            <person name="Chua N.H."/>
        </authorList>
    </citation>
    <scope>FUNCTION</scope>
    <scope>CATALYTIC ACTIVITY</scope>
    <scope>INTERACTION WITH NAC92/ORE1</scope>
    <scope>SUBCELLULAR LOCATION</scope>
    <scope>DOMAIN</scope>
</reference>
<reference key="15">
    <citation type="journal article" date="2022" name="Plant Sci.">
        <title>Loss-of-function of NITROGEN LIMITATION ADAPTATION confers disease resistance in Arabidopsis by modulating hormone signaling and camalexin content.</title>
        <authorList>
            <person name="Val-Torregrosa B."/>
            <person name="Bundo M."/>
            <person name="Mallavarapu M.D."/>
            <person name="Chiou T.J."/>
            <person name="Flors V."/>
            <person name="Segundo B.S."/>
        </authorList>
    </citation>
    <scope>FUNCTION</scope>
</reference>
<dbReference type="EC" id="2.3.2.27" evidence="7 8 9 10"/>
<dbReference type="EMBL" id="DQ059096">
    <property type="protein sequence ID" value="AAY57582.1"/>
    <property type="molecule type" value="mRNA"/>
</dbReference>
<dbReference type="EMBL" id="AC009525">
    <property type="protein sequence ID" value="AAF02879.1"/>
    <property type="molecule type" value="Genomic_DNA"/>
</dbReference>
<dbReference type="EMBL" id="CP002684">
    <property type="protein sequence ID" value="AEE27485.1"/>
    <property type="molecule type" value="Genomic_DNA"/>
</dbReference>
<dbReference type="EMBL" id="CP002684">
    <property type="protein sequence ID" value="AEE27486.1"/>
    <property type="molecule type" value="Genomic_DNA"/>
</dbReference>
<dbReference type="EMBL" id="AK229396">
    <property type="protein sequence ID" value="BAF01258.1"/>
    <property type="molecule type" value="mRNA"/>
</dbReference>
<dbReference type="EMBL" id="AY088823">
    <property type="protein sequence ID" value="AAM67132.1"/>
    <property type="molecule type" value="mRNA"/>
</dbReference>
<dbReference type="EMBL" id="BT044616">
    <property type="protein sequence ID" value="ACI31316.1"/>
    <property type="molecule type" value="mRNA"/>
</dbReference>
<dbReference type="PIR" id="H86158">
    <property type="entry name" value="H86158"/>
</dbReference>
<dbReference type="RefSeq" id="NP_001117218.1">
    <molecule id="Q9SRX9-2"/>
    <property type="nucleotide sequence ID" value="NM_001123746.1"/>
</dbReference>
<dbReference type="RefSeq" id="NP_563667.1">
    <molecule id="Q9SRX9-1"/>
    <property type="nucleotide sequence ID" value="NM_100167.3"/>
</dbReference>
<dbReference type="SMR" id="Q9SRX9"/>
<dbReference type="FunCoup" id="Q9SRX9">
    <property type="interactions" value="262"/>
</dbReference>
<dbReference type="STRING" id="3702.Q9SRX9"/>
<dbReference type="iPTMnet" id="Q9SRX9"/>
<dbReference type="PaxDb" id="3702-AT1G02860.1"/>
<dbReference type="ProteomicsDB" id="240968">
    <molecule id="Q9SRX9-1"/>
</dbReference>
<dbReference type="EnsemblPlants" id="AT1G02860.1">
    <molecule id="Q9SRX9-1"/>
    <property type="protein sequence ID" value="AT1G02860.1"/>
    <property type="gene ID" value="AT1G02860"/>
</dbReference>
<dbReference type="EnsemblPlants" id="AT1G02860.2">
    <molecule id="Q9SRX9-2"/>
    <property type="protein sequence ID" value="AT1G02860.2"/>
    <property type="gene ID" value="AT1G02860"/>
</dbReference>
<dbReference type="GeneID" id="839559"/>
<dbReference type="Gramene" id="AT1G02860.1">
    <molecule id="Q9SRX9-1"/>
    <property type="protein sequence ID" value="AT1G02860.1"/>
    <property type="gene ID" value="AT1G02860"/>
</dbReference>
<dbReference type="Gramene" id="AT1G02860.2">
    <molecule id="Q9SRX9-2"/>
    <property type="protein sequence ID" value="AT1G02860.2"/>
    <property type="gene ID" value="AT1G02860"/>
</dbReference>
<dbReference type="KEGG" id="ath:AT1G02860"/>
<dbReference type="Araport" id="AT1G02860"/>
<dbReference type="TAIR" id="AT1G02860">
    <property type="gene designation" value="NLA"/>
</dbReference>
<dbReference type="eggNOG" id="ENOG502QQHB">
    <property type="taxonomic scope" value="Eukaryota"/>
</dbReference>
<dbReference type="HOGENOM" id="CLU_058131_0_0_1"/>
<dbReference type="InParanoid" id="Q9SRX9"/>
<dbReference type="OMA" id="NCPRECA"/>
<dbReference type="OrthoDB" id="6105938at2759"/>
<dbReference type="PhylomeDB" id="Q9SRX9"/>
<dbReference type="UniPathway" id="UPA00143"/>
<dbReference type="PRO" id="PR:Q9SRX9"/>
<dbReference type="Proteomes" id="UP000006548">
    <property type="component" value="Chromosome 1"/>
</dbReference>
<dbReference type="ExpressionAtlas" id="Q9SRX9">
    <property type="expression patterns" value="baseline and differential"/>
</dbReference>
<dbReference type="GO" id="GO:0016607">
    <property type="term" value="C:nuclear speck"/>
    <property type="evidence" value="ECO:0007669"/>
    <property type="project" value="UniProtKB-SubCell"/>
</dbReference>
<dbReference type="GO" id="GO:0005634">
    <property type="term" value="C:nucleus"/>
    <property type="evidence" value="ECO:0000314"/>
    <property type="project" value="TAIR"/>
</dbReference>
<dbReference type="GO" id="GO:0005886">
    <property type="term" value="C:plasma membrane"/>
    <property type="evidence" value="ECO:0000314"/>
    <property type="project" value="TAIR"/>
</dbReference>
<dbReference type="GO" id="GO:0004842">
    <property type="term" value="F:ubiquitin-protein transferase activity"/>
    <property type="evidence" value="ECO:0000315"/>
    <property type="project" value="TAIR"/>
</dbReference>
<dbReference type="GO" id="GO:0008270">
    <property type="term" value="F:zinc ion binding"/>
    <property type="evidence" value="ECO:0007669"/>
    <property type="project" value="UniProtKB-KW"/>
</dbReference>
<dbReference type="GO" id="GO:0042742">
    <property type="term" value="P:defense response to bacterium"/>
    <property type="evidence" value="ECO:0000315"/>
    <property type="project" value="TAIR"/>
</dbReference>
<dbReference type="GO" id="GO:0009626">
    <property type="term" value="P:plant-type hypersensitive response"/>
    <property type="evidence" value="ECO:0000315"/>
    <property type="project" value="TAIR"/>
</dbReference>
<dbReference type="GO" id="GO:0016567">
    <property type="term" value="P:protein ubiquitination"/>
    <property type="evidence" value="ECO:0007669"/>
    <property type="project" value="UniProtKB-UniPathway"/>
</dbReference>
<dbReference type="GO" id="GO:0010337">
    <property type="term" value="P:regulation of salicylic acid metabolic process"/>
    <property type="evidence" value="ECO:0000315"/>
    <property type="project" value="TAIR"/>
</dbReference>
<dbReference type="GO" id="GO:0080021">
    <property type="term" value="P:response to benzoic acid"/>
    <property type="evidence" value="ECO:0000315"/>
    <property type="project" value="TAIR"/>
</dbReference>
<dbReference type="GO" id="GO:0010167">
    <property type="term" value="P:response to nitrate"/>
    <property type="evidence" value="ECO:0000315"/>
    <property type="project" value="TAIR"/>
</dbReference>
<dbReference type="GO" id="GO:0009751">
    <property type="term" value="P:response to salicylic acid"/>
    <property type="evidence" value="ECO:0000270"/>
    <property type="project" value="TAIR"/>
</dbReference>
<dbReference type="GO" id="GO:0009697">
    <property type="term" value="P:salicylic acid biosynthetic process"/>
    <property type="evidence" value="ECO:0000315"/>
    <property type="project" value="TAIR"/>
</dbReference>
<dbReference type="GO" id="GO:0009627">
    <property type="term" value="P:systemic acquired resistance"/>
    <property type="evidence" value="ECO:0000315"/>
    <property type="project" value="TAIR"/>
</dbReference>
<dbReference type="CDD" id="cd23127">
    <property type="entry name" value="RING-HC_BAH1-like"/>
    <property type="match status" value="1"/>
</dbReference>
<dbReference type="CDD" id="cd14482">
    <property type="entry name" value="SPX_BAH1-like"/>
    <property type="match status" value="1"/>
</dbReference>
<dbReference type="FunFam" id="3.30.40.10:FF:000681">
    <property type="entry name" value="BnaA09g51130D protein"/>
    <property type="match status" value="1"/>
</dbReference>
<dbReference type="Gene3D" id="3.30.40.10">
    <property type="entry name" value="Zinc/RING finger domain, C3HC4 (zinc finger)"/>
    <property type="match status" value="1"/>
</dbReference>
<dbReference type="InterPro" id="IPR033326">
    <property type="entry name" value="BAH1"/>
</dbReference>
<dbReference type="InterPro" id="IPR004331">
    <property type="entry name" value="SPX_dom"/>
</dbReference>
<dbReference type="InterPro" id="IPR018957">
    <property type="entry name" value="Znf_C3HC4_RING-type"/>
</dbReference>
<dbReference type="InterPro" id="IPR001841">
    <property type="entry name" value="Znf_RING"/>
</dbReference>
<dbReference type="InterPro" id="IPR013083">
    <property type="entry name" value="Znf_RING/FYVE/PHD"/>
</dbReference>
<dbReference type="InterPro" id="IPR017907">
    <property type="entry name" value="Znf_RING_CS"/>
</dbReference>
<dbReference type="PANTHER" id="PTHR46764">
    <property type="entry name" value="E3 UBIQUITIN-PROTEIN LIGASE BAH1"/>
    <property type="match status" value="1"/>
</dbReference>
<dbReference type="PANTHER" id="PTHR46764:SF1">
    <property type="entry name" value="E3 UBIQUITIN-PROTEIN LIGASE NLA"/>
    <property type="match status" value="1"/>
</dbReference>
<dbReference type="Pfam" id="PF00097">
    <property type="entry name" value="zf-C3HC4"/>
    <property type="match status" value="1"/>
</dbReference>
<dbReference type="SMART" id="SM00184">
    <property type="entry name" value="RING"/>
    <property type="match status" value="1"/>
</dbReference>
<dbReference type="SUPFAM" id="SSF57850">
    <property type="entry name" value="RING/U-box"/>
    <property type="match status" value="1"/>
</dbReference>
<dbReference type="PROSITE" id="PS51382">
    <property type="entry name" value="SPX"/>
    <property type="match status" value="1"/>
</dbReference>
<dbReference type="PROSITE" id="PS00518">
    <property type="entry name" value="ZF_RING_1"/>
    <property type="match status" value="1"/>
</dbReference>
<dbReference type="PROSITE" id="PS50089">
    <property type="entry name" value="ZF_RING_2"/>
    <property type="match status" value="1"/>
</dbReference>
<comment type="function">
    <text evidence="3 4 5 6 7 8 9 10 11">E3 ubiquitin-protein ligase that mediates E2-dependent protein ubiquitination (PubMed:17355433). Plays a role in salicylic acid-mediated negative feedback regulation of salicylic acid (SA) accumulation (PubMed:18753285). May be involved in the overall regulation of SA, benzoic acid and phenylpropanoid biosynthesis (PubMed:18753285). Involved in defense response (PubMed:35839945). May act as negative regulator of resistance to the necrotrophic fungal pathogen Plectosphaerella cucumerina by modulating the accumulation of the phytoalexin camalexin and the salicylic acid- and jasmonate- dependent defense pathways (PubMed:35839945). Controls the adaptability to nitrogen limitation by channeling the phenylpropanoid metabolic flux to the induced anthocyanin synthesis (PubMed:17355433, PubMed:18552353). Involved in the regulation of inorganic phosphate (Pi) homeostasis in a nitrate-dependent fashion (PubMed:21455488). Directs the ubiquitination and subsequent degradation of the plasma membrane-localized inorganic phosphate transporters PHT1-1 and PHT1-4, to maintain phosphate homeostasis (PubMed:24122828). The ubiquitination of PHTs triggers their clathrin-dependent endocytosis and trafficking to the vacuole through the endosomal pathway for degradation (PubMed:24122828). Functions cooperatively with UBC24/PHO2 to regulate the abundance of PHT1-1, PHT1-2 and PHT1-3 in different subcellular compartments (PubMed:24122828). Regulates Pi homeostasis by mediating, cooperatively with UBC24/PHO2, polyubiquitination of PHT1-4 and its targeting for degradation (PubMed:24474629). Directs the polyubiquitination and subsequent degradation of the plasma membrane-localized nitrate transporter NPF2.13/NRT1.7, to help plants to adapt to nitrogen deficiency by regulating the source-to-sink remobilization of nitrate (PubMed:28032637). Regulates leaf senescence during nitrogen deficiency by mediating, cooperatively with UBC24/PHO2, polyubiquitination of NAC92/ORE1 and its targeting for degradation (PubMed:30374089).</text>
</comment>
<comment type="catalytic activity">
    <reaction evidence="7 8 9 10">
        <text>S-ubiquitinyl-[E2 ubiquitin-conjugating enzyme]-L-cysteine + [acceptor protein]-L-lysine = [E2 ubiquitin-conjugating enzyme]-L-cysteine + N(6)-ubiquitinyl-[acceptor protein]-L-lysine.</text>
        <dbReference type="EC" id="2.3.2.27"/>
    </reaction>
</comment>
<comment type="pathway">
    <text evidence="7 8 9">Protein modification; protein ubiquitination.</text>
</comment>
<comment type="subunit">
    <text evidence="3 7 8 9 10">Interacts with UBC8 (PubMed:17355433). Interacts with PHT1-1 and PHT1-4 (PubMed:24122828). Forms homodimers (via RING domain) (PubMed:24474629). Interacts with UBC24/PHO2 (PubMed:24474629). Interacts with NPF2.13/NRT1.7 (PubMed:28032637). Interacts with NAC92/ORE1 (PubMed:30374089).</text>
</comment>
<comment type="subcellular location">
    <subcellularLocation>
        <location evidence="3">Nucleus speckle</location>
    </subcellularLocation>
    <subcellularLocation>
        <location evidence="10">Nucleus</location>
    </subcellularLocation>
    <subcellularLocation>
        <location evidence="7 8 9">Cell membrane</location>
    </subcellularLocation>
    <text evidence="7 9 10">Localizes at the plasma membrane, where it interacts with PHT1-1 and PHT1-4 (PubMed:24122828). Localizes at the plasma membrane, where it interacts with NPF2.13/NRT1.7 (PubMed:28032637). Localizes in the nucleus, where it interacts with NAC92/ORE1 (PubMed:30374089).</text>
</comment>
<comment type="alternative products">
    <event type="alternative splicing"/>
    <isoform>
        <id>Q9SRX9-1</id>
        <name>1</name>
        <sequence type="displayed"/>
    </isoform>
    <isoform>
        <id>Q9SRX9-2</id>
        <name>2</name>
        <sequence type="described" ref="VSP_035909"/>
    </isoform>
</comment>
<comment type="tissue specificity">
    <text evidence="3">High expression in roots and stems, medium in seedlings, flowers, rosette and cauline leaves, and very low in siliques. Detected in cotyledons, hypocotyls, pedicel, receptacle, pistil, sepal, filament of stamen and at the two ends of developing siliques.</text>
</comment>
<comment type="induction">
    <text evidence="5">Induced by salicylic acid and benzoic acid.</text>
</comment>
<comment type="domain">
    <text evidence="7 8 10">The RING-type zinc finger domain mediates binding to an E2 ubiquitin-conjugating enzyme.</text>
</comment>
<comment type="disruption phenotype">
    <text evidence="5">Plants show a low-nitrogen-induced early senescence phenotype and an excessive accumulation of salicylic acid after pathogen infection or application of benzoic acid.</text>
</comment>
<comment type="miscellaneous">
    <text evidence="6 7">Is the target of miR827, a Pi starvation-induced microRNA.</text>
</comment>
<proteinExistence type="evidence at protein level"/>
<name>NLA_ARATH</name>
<sequence>MKFCKKYEEYMQGQKEKKNLPGVGFKKLKKILKRCRRNHVPSRISFTDAINHNCSRECPVCDGTFFPELLKEMEDVVGWFNEHAQKLLELHLASGFTKCLTWLRGNSRKKDHHGLIQEGKDLVNYALINAVAIRKILKKYDKIHESRQGQAFKTQVQKMRIEILQSPWLCELMAFHINLKESKKESGATITSPPPPVHALFDGCALTFDDGKPLLSCELSDSVKVDIDLTCSICLDTVFDPISLTCGHIYCYMCACSAASVNVVDGLKTAEATEKCPLCREDGVYKGAVHLDELNILLKRSCRDYWEERRKTERAERLQQAKEYWDYQCRSFTGI</sequence>
<gene>
    <name evidence="12" type="primary">NLA</name>
    <name evidence="13" type="synonym">BAH1</name>
    <name evidence="16" type="ordered locus">At1g02860</name>
    <name evidence="15" type="ORF">F22D16.14</name>
</gene>
<feature type="chain" id="PRO_0000355543" description="E3 ubiquitin-protein ligase NLA">
    <location>
        <begin position="1"/>
        <end position="335"/>
    </location>
</feature>
<feature type="domain" description="SPX" evidence="2">
    <location>
        <begin position="1"/>
        <end position="154"/>
    </location>
</feature>
<feature type="zinc finger region" description="RING-type" evidence="1">
    <location>
        <begin position="231"/>
        <end position="280"/>
    </location>
</feature>
<feature type="splice variant" id="VSP_035909" description="In isoform 2." evidence="14">
    <location>
        <begin position="301"/>
        <end position="302"/>
    </location>
</feature>
<feature type="mutagenesis site" description="In bah1-2; loss of activity." evidence="5">
    <original>S</original>
    <variation>F</variation>
    <location>
        <position position="55"/>
    </location>
</feature>
<feature type="mutagenesis site" description="In bah1-4; loss of activity." evidence="5">
    <original>E</original>
    <variation>K</variation>
    <location>
        <position position="74"/>
    </location>
</feature>
<feature type="mutagenesis site" description="In bah1-5; loss of activity." evidence="5">
    <original>V</original>
    <variation>I</variation>
    <location>
        <position position="156"/>
    </location>
</feature>
<feature type="mutagenesis site" description="In bah1-6; loss of activity." evidence="5">
    <original>R</original>
    <variation>Q</variation>
    <location>
        <position position="160"/>
    </location>
</feature>
<feature type="mutagenesis site" description="In bah1-7; loss of activity." evidence="5">
    <original>E</original>
    <variation>K</variation>
    <location>
        <position position="162"/>
    </location>
</feature>
<feature type="mutagenesis site" description="In bah1-9; loss of activity." evidence="5">
    <original>E</original>
    <variation>K</variation>
    <location>
        <position position="181"/>
    </location>
</feature>
<feature type="mutagenesis site" description="In nla; loss of activity." evidence="3">
    <location>
        <begin position="236"/>
        <end position="281"/>
    </location>
</feature>
<feature type="mutagenesis site" description="Loss of activity." evidence="7">
    <original>C</original>
    <variation>A</variation>
    <location>
        <position position="279"/>
    </location>
</feature>
<feature type="sequence conflict" description="In Ref. 5; AAM67132." evidence="14" ref="5">
    <original>D</original>
    <variation>Y</variation>
    <location>
        <position position="292"/>
    </location>
</feature>
<accession>Q9SRX9</accession>
<accession>B3H5D0</accession>
<accession>Q8L8T3</accession>
<organism>
    <name type="scientific">Arabidopsis thaliana</name>
    <name type="common">Mouse-ear cress</name>
    <dbReference type="NCBI Taxonomy" id="3702"/>
    <lineage>
        <taxon>Eukaryota</taxon>
        <taxon>Viridiplantae</taxon>
        <taxon>Streptophyta</taxon>
        <taxon>Embryophyta</taxon>
        <taxon>Tracheophyta</taxon>
        <taxon>Spermatophyta</taxon>
        <taxon>Magnoliopsida</taxon>
        <taxon>eudicotyledons</taxon>
        <taxon>Gunneridae</taxon>
        <taxon>Pentapetalae</taxon>
        <taxon>rosids</taxon>
        <taxon>malvids</taxon>
        <taxon>Brassicales</taxon>
        <taxon>Brassicaceae</taxon>
        <taxon>Camelineae</taxon>
        <taxon>Arabidopsis</taxon>
    </lineage>
</organism>
<protein>
    <recommendedName>
        <fullName evidence="14">E3 ubiquitin-protein ligase NLA</fullName>
        <ecNumber evidence="7 8 9 10">2.3.2.27</ecNumber>
    </recommendedName>
    <alternativeName>
        <fullName evidence="13">Protein BENZOIC ACID HYPERSENSITIVE 1</fullName>
    </alternativeName>
    <alternativeName>
        <fullName evidence="12">Protein NITROGEN LIMITATION ADAPTATION</fullName>
    </alternativeName>
    <alternativeName>
        <fullName evidence="13">RING-type E3 ubiquitin transferase BAH1</fullName>
    </alternativeName>
</protein>
<evidence type="ECO:0000255" key="1">
    <source>
        <dbReference type="PROSITE-ProRule" id="PRU00175"/>
    </source>
</evidence>
<evidence type="ECO:0000255" key="2">
    <source>
        <dbReference type="PROSITE-ProRule" id="PRU00714"/>
    </source>
</evidence>
<evidence type="ECO:0000269" key="3">
    <source>
    </source>
</evidence>
<evidence type="ECO:0000269" key="4">
    <source>
    </source>
</evidence>
<evidence type="ECO:0000269" key="5">
    <source>
    </source>
</evidence>
<evidence type="ECO:0000269" key="6">
    <source>
    </source>
</evidence>
<evidence type="ECO:0000269" key="7">
    <source>
    </source>
</evidence>
<evidence type="ECO:0000269" key="8">
    <source>
    </source>
</evidence>
<evidence type="ECO:0000269" key="9">
    <source>
    </source>
</evidence>
<evidence type="ECO:0000269" key="10">
    <source>
    </source>
</evidence>
<evidence type="ECO:0000269" key="11">
    <source>
    </source>
</evidence>
<evidence type="ECO:0000303" key="12">
    <source>
    </source>
</evidence>
<evidence type="ECO:0000303" key="13">
    <source>
    </source>
</evidence>
<evidence type="ECO:0000305" key="14"/>
<evidence type="ECO:0000312" key="15">
    <source>
        <dbReference type="EMBL" id="AAF02879.1"/>
    </source>
</evidence>
<evidence type="ECO:0000312" key="16">
    <source>
        <dbReference type="EMBL" id="AEE27485.1"/>
    </source>
</evidence>